<protein>
    <recommendedName>
        <fullName>Omega-conotoxin-like TxO3</fullName>
    </recommendedName>
</protein>
<organism>
    <name type="scientific">Conus textile</name>
    <name type="common">Cloth-of-gold cone</name>
    <dbReference type="NCBI Taxonomy" id="6494"/>
    <lineage>
        <taxon>Eukaryota</taxon>
        <taxon>Metazoa</taxon>
        <taxon>Spiralia</taxon>
        <taxon>Lophotrochozoa</taxon>
        <taxon>Mollusca</taxon>
        <taxon>Gastropoda</taxon>
        <taxon>Caenogastropoda</taxon>
        <taxon>Neogastropoda</taxon>
        <taxon>Conoidea</taxon>
        <taxon>Conidae</taxon>
        <taxon>Conus</taxon>
        <taxon>Cylinder</taxon>
    </lineage>
</organism>
<gene>
    <name type="primary">TXO3</name>
</gene>
<proteinExistence type="evidence at transcript level"/>
<name>O163_CONTE</name>
<dbReference type="EMBL" id="AF146356">
    <property type="protein sequence ID" value="AAD31916.1"/>
    <property type="molecule type" value="mRNA"/>
</dbReference>
<dbReference type="ConoServer" id="870">
    <property type="toxin name" value="TxO3 precursor"/>
</dbReference>
<dbReference type="GO" id="GO:0005576">
    <property type="term" value="C:extracellular region"/>
    <property type="evidence" value="ECO:0007669"/>
    <property type="project" value="UniProtKB-SubCell"/>
</dbReference>
<dbReference type="GO" id="GO:0044231">
    <property type="term" value="C:host cell presynaptic membrane"/>
    <property type="evidence" value="ECO:0007669"/>
    <property type="project" value="UniProtKB-KW"/>
</dbReference>
<dbReference type="GO" id="GO:0005246">
    <property type="term" value="F:calcium channel regulator activity"/>
    <property type="evidence" value="ECO:0007669"/>
    <property type="project" value="UniProtKB-KW"/>
</dbReference>
<dbReference type="GO" id="GO:0008200">
    <property type="term" value="F:ion channel inhibitor activity"/>
    <property type="evidence" value="ECO:0007669"/>
    <property type="project" value="InterPro"/>
</dbReference>
<dbReference type="GO" id="GO:0090729">
    <property type="term" value="F:toxin activity"/>
    <property type="evidence" value="ECO:0007669"/>
    <property type="project" value="UniProtKB-KW"/>
</dbReference>
<dbReference type="InterPro" id="IPR004214">
    <property type="entry name" value="Conotoxin"/>
</dbReference>
<dbReference type="InterPro" id="IPR012321">
    <property type="entry name" value="Conotoxin_omega-typ_CS"/>
</dbReference>
<dbReference type="Pfam" id="PF02950">
    <property type="entry name" value="Conotoxin"/>
    <property type="match status" value="1"/>
</dbReference>
<dbReference type="PROSITE" id="PS60004">
    <property type="entry name" value="OMEGA_CONOTOXIN"/>
    <property type="match status" value="1"/>
</dbReference>
<feature type="signal peptide" evidence="2">
    <location>
        <begin position="1"/>
        <end position="22"/>
    </location>
</feature>
<feature type="propeptide" id="PRO_0000034954" evidence="1">
    <location>
        <begin position="23"/>
        <end position="52"/>
    </location>
</feature>
<feature type="peptide" id="PRO_0000034955" description="Omega-conotoxin-like TxO3">
    <location>
        <begin position="53"/>
        <end position="76"/>
    </location>
</feature>
<feature type="disulfide bond" evidence="1">
    <location>
        <begin position="53"/>
        <end position="67"/>
    </location>
</feature>
<feature type="disulfide bond" evidence="1">
    <location>
        <begin position="60"/>
        <end position="71"/>
    </location>
</feature>
<feature type="disulfide bond" evidence="1">
    <location>
        <begin position="66"/>
        <end position="75"/>
    </location>
</feature>
<keyword id="KW-0108">Calcium channel impairing toxin</keyword>
<keyword id="KW-0165">Cleavage on pair of basic residues</keyword>
<keyword id="KW-1015">Disulfide bond</keyword>
<keyword id="KW-0872">Ion channel impairing toxin</keyword>
<keyword id="KW-0960">Knottin</keyword>
<keyword id="KW-0528">Neurotoxin</keyword>
<keyword id="KW-0638">Presynaptic neurotoxin</keyword>
<keyword id="KW-0964">Secreted</keyword>
<keyword id="KW-0732">Signal</keyword>
<keyword id="KW-0800">Toxin</keyword>
<keyword id="KW-1218">Voltage-gated calcium channel impairing toxin</keyword>
<reference key="1">
    <citation type="journal article" date="1999" name="Peptides">
        <title>Conopeptides from Conus striatus and Conus textile by cDNA cloning.</title>
        <authorList>
            <person name="Lu B.-S."/>
            <person name="Yu F."/>
            <person name="Zhao D."/>
            <person name="Huang P.-T."/>
            <person name="Huang C.-F."/>
        </authorList>
    </citation>
    <scope>NUCLEOTIDE SEQUENCE [MRNA]</scope>
    <source>
        <tissue>Venom duct</tissue>
    </source>
</reference>
<sequence>MKLTCVVIVAVLFLTAWTFVTAVPHSSNALENLYLKAHHEMNNPEASELNKRCYDGGTSCDSGIQCCSGWCIFVCF</sequence>
<accession>Q9XZL0</accession>
<comment type="function">
    <text evidence="1">Omega-conotoxins act at presynaptic membranes, they bind and block voltage-gated calcium channels (Cav).</text>
</comment>
<comment type="subcellular location">
    <subcellularLocation>
        <location evidence="1">Secreted</location>
    </subcellularLocation>
</comment>
<comment type="tissue specificity">
    <text>Expressed by the venom duct.</text>
</comment>
<comment type="domain">
    <text evidence="1">The presence of a 'disulfide through disulfide knot' structurally defines this protein as a knottin.</text>
</comment>
<comment type="domain">
    <text>The cysteine framework is VI/VII (C-C-CC-C-C).</text>
</comment>
<comment type="similarity">
    <text evidence="3">Belongs to the conotoxin O1 superfamily.</text>
</comment>
<evidence type="ECO:0000250" key="1"/>
<evidence type="ECO:0000255" key="2"/>
<evidence type="ECO:0000305" key="3"/>